<comment type="function">
    <text evidence="1">Plays a role in per os infectivity in vivo. Facilitates embedding of occlusion-derived viruses (ODVs) into occlusion bodies (OBs).</text>
</comment>
<comment type="subcellular location">
    <subcellularLocation>
        <location evidence="1">Host cytoplasm</location>
    </subcellularLocation>
</comment>
<proteinExistence type="predicted"/>
<sequence>MSKYALLQKMIINELLFLNDNVNYATNKLFSKDQANGELHKLLAMLLNYKKSNENAPNIKFDLKNLSFMLENKDKIDIIQFDDIKNYVQPAIVNLFESHNRSLNNYSTELSTLLEDGNENLVPNITDIDNIKLSHMQLARLLCYTAVVESRNSKPWKAIFNNDTNVLTDSFFNHIMNILNMIKTNQGSLAHNVSVVYHIENIQMNLENKLKPRSITIETVDKDKFENKHSDIEVCYVMNNSLHPQDVNSQQTLMCSSFVELNVLPFCLYNDTLPDDQSMSVFNLYKFEQTKNKSVSKPSRLGNVMFVNSLIDKPITRETIVNIINSYHNACQNLKRSGHRVVGDYRAYERDYKLAALDFIILMLVTSITHRTLKYNMLNIHEKMFQELKTVVCKHNAAKLYDILINYDINKEPLNNFRYNYEVL</sequence>
<name>AC114_NPVAC</name>
<dbReference type="EMBL" id="L22858">
    <property type="protein sequence ID" value="AAA66744.1"/>
    <property type="molecule type" value="Genomic_DNA"/>
</dbReference>
<dbReference type="PIR" id="C72864">
    <property type="entry name" value="C72864"/>
</dbReference>
<dbReference type="RefSeq" id="NP_054144.1">
    <property type="nucleotide sequence ID" value="NC_001623.1"/>
</dbReference>
<dbReference type="SMR" id="P41667"/>
<dbReference type="GeneID" id="1403947"/>
<dbReference type="KEGG" id="vg:1403947"/>
<dbReference type="OrthoDB" id="5027at10239"/>
<dbReference type="Proteomes" id="UP000008292">
    <property type="component" value="Segment"/>
</dbReference>
<dbReference type="GO" id="GO:0030430">
    <property type="term" value="C:host cell cytoplasm"/>
    <property type="evidence" value="ECO:0007669"/>
    <property type="project" value="UniProtKB-SubCell"/>
</dbReference>
<organismHost>
    <name type="scientific">Lepidoptera</name>
    <name type="common">butterflies and moths</name>
    <dbReference type="NCBI Taxonomy" id="7088"/>
</organismHost>
<evidence type="ECO:0000269" key="1">
    <source>
    </source>
</evidence>
<keyword id="KW-1035">Host cytoplasm</keyword>
<keyword id="KW-1185">Reference proteome</keyword>
<organism>
    <name type="scientific">Autographa californica nuclear polyhedrosis virus</name>
    <name type="common">AcMNPV</name>
    <dbReference type="NCBI Taxonomy" id="46015"/>
    <lineage>
        <taxon>Viruses</taxon>
        <taxon>Viruses incertae sedis</taxon>
        <taxon>Naldaviricetes</taxon>
        <taxon>Lefavirales</taxon>
        <taxon>Baculoviridae</taxon>
        <taxon>Alphabaculovirus</taxon>
        <taxon>Alphabaculovirus aucalifornicae</taxon>
    </lineage>
</organism>
<feature type="chain" id="PRO_0000133051" description="Protein ORF114">
    <location>
        <begin position="1"/>
        <end position="424"/>
    </location>
</feature>
<accession>P41667</accession>
<reference key="1">
    <citation type="journal article" date="1994" name="Virology">
        <title>The complete DNA sequence of Autographa californica nuclear polyhedrosis virus.</title>
        <authorList>
            <person name="Ayres M.D."/>
            <person name="Howard S.C."/>
            <person name="Kuzio J."/>
            <person name="Lopez-Ferber M."/>
            <person name="Possee R.D."/>
        </authorList>
    </citation>
    <scope>NUCLEOTIDE SEQUENCE [LARGE SCALE GENOMIC DNA]</scope>
    <source>
        <strain>C6</strain>
    </source>
</reference>
<reference key="2">
    <citation type="journal article" date="2012" name="Virus Genes">
        <title>Autographa californica multiple nucleopolyhedrovirus orf114 is not essential for virus replication in vitro, but its knockout reduces per os infectivity in vivo.</title>
        <authorList>
            <person name="Wei W."/>
            <person name="Zhou Y."/>
            <person name="Lei C."/>
            <person name="Sun X."/>
        </authorList>
    </citation>
    <scope>FUNCTION</scope>
    <scope>SUBCELLULAR LOCATION</scope>
</reference>
<protein>
    <recommendedName>
        <fullName>Protein ORF114</fullName>
    </recommendedName>
</protein>